<sequence length="365" mass="37851">MVRGARKAIAVGVAVAVACGLQKHLNFVPGPRHAAPVAAAAASMMMAPAAFADEIGDAAKKLGDASYSFAKEVDWNNGIFLQAPGKFQPLEALKAIDKMIEMGAAADPKLLKDAAEAHHKAIGSISGPNGVTSRADWDAVNAAIGRVVASVPKAKVMAVYDSVTAITDPGVPAYMKSLVNGPDAEKAYQGFLEFKDVVEKNQVATASAPAVVPSGDKIGEAAKALSDASYPFIKDIDWLSDIYLKPLPGKTAPETLKAIDKMIVMGAKMDGNLLKAAAEAHHKAIGSIDATGVTSAADYEAVNAAIGRLVASVPKTTVMDVYNSMAGVVDSSVPNNLFSKVNPLDAVAAAKGFYTFKDVVEASQR</sequence>
<accession>P51874</accession>
<organism>
    <name type="scientific">Symbiodinium sp.</name>
    <name type="common">Dinoflagellate</name>
    <dbReference type="NCBI Taxonomy" id="2950"/>
    <lineage>
        <taxon>Eukaryota</taxon>
        <taxon>Sar</taxon>
        <taxon>Alveolata</taxon>
        <taxon>Dinophyceae</taxon>
        <taxon>Suessiales</taxon>
        <taxon>Symbiodiniaceae</taxon>
        <taxon>Symbiodinium</taxon>
    </lineage>
</organism>
<comment type="function">
    <text>Water-soluble antenna for capture of solar energy in the blue-green range. Peridinin is an asymmetric carotenoid.</text>
</comment>
<comment type="biophysicochemical properties">
    <absorption>
        <max>~480 nm</max>
    </absorption>
</comment>
<comment type="subunit">
    <text>Monomer.</text>
</comment>
<comment type="subcellular location">
    <subcellularLocation>
        <location>Plastid</location>
        <location>Chloroplast</location>
    </subcellularLocation>
</comment>
<comment type="domain">
    <text>The mature protein is composed of 2 almost identical repeat units.</text>
</comment>
<feature type="transit peptide" description="Chloroplast" evidence="2">
    <location>
        <begin position="1"/>
        <end position="52"/>
    </location>
</feature>
<feature type="chain" id="PRO_0000022028" description="Peridinin-chlorophyll a-binding protein, chloroplastic">
    <location>
        <begin position="53"/>
        <end position="365"/>
    </location>
</feature>
<feature type="repeat" description="1">
    <location>
        <begin position="53"/>
        <end position="215"/>
    </location>
</feature>
<feature type="repeat" description="2">
    <location>
        <begin position="216"/>
        <end position="365"/>
    </location>
</feature>
<feature type="site" description="Chlorophyll a binding" evidence="1">
    <location>
        <position position="118"/>
    </location>
</feature>
<feature type="site" description="Chlorophyll a binding" evidence="1">
    <location>
        <position position="281"/>
    </location>
</feature>
<reference key="1">
    <citation type="journal article" date="1994" name="Plant Mol. Biol.">
        <title>Nucleotide sequence of a cDNA clone encoding the precursor of the peridinin-chlorophyll a-binding protein from the dinoflagellate Symbiodinium sp.</title>
        <authorList>
            <person name="Norris B.J."/>
            <person name="Miller D.J."/>
        </authorList>
    </citation>
    <scope>NUCLEOTIDE SEQUENCE [MRNA]</scope>
    <scope>PROTEIN SEQUENCE OF 53-82 AND 255-275</scope>
</reference>
<protein>
    <recommendedName>
        <fullName>Peridinin-chlorophyll a-binding protein, chloroplastic</fullName>
        <shortName>PCP</shortName>
    </recommendedName>
</protein>
<dbReference type="EMBL" id="L13613">
    <property type="protein sequence ID" value="AAA19814.1"/>
    <property type="molecule type" value="mRNA"/>
</dbReference>
<dbReference type="PIR" id="S43780">
    <property type="entry name" value="S43780"/>
</dbReference>
<dbReference type="SMR" id="P51874"/>
<dbReference type="GO" id="GO:0009507">
    <property type="term" value="C:chloroplast"/>
    <property type="evidence" value="ECO:0007669"/>
    <property type="project" value="UniProtKB-SubCell"/>
</dbReference>
<dbReference type="GO" id="GO:0030076">
    <property type="term" value="C:light-harvesting complex"/>
    <property type="evidence" value="ECO:0007669"/>
    <property type="project" value="UniProtKB-KW"/>
</dbReference>
<dbReference type="GO" id="GO:0016168">
    <property type="term" value="F:chlorophyll binding"/>
    <property type="evidence" value="ECO:0007669"/>
    <property type="project" value="UniProtKB-KW"/>
</dbReference>
<dbReference type="Gene3D" id="1.40.10.10">
    <property type="entry name" value="Peridinin-chlorophyll A binding"/>
    <property type="match status" value="2"/>
</dbReference>
<dbReference type="InterPro" id="IPR003376">
    <property type="entry name" value="Peridinin-chlorophyll-bd_prot"/>
</dbReference>
<dbReference type="InterPro" id="IPR036550">
    <property type="entry name" value="Peridinin-chlorophyll-bd_sf"/>
</dbReference>
<dbReference type="Pfam" id="PF02429">
    <property type="entry name" value="PCP"/>
    <property type="match status" value="2"/>
</dbReference>
<dbReference type="SUPFAM" id="SSF48608">
    <property type="entry name" value="Peridinin-chlorophyll protein"/>
    <property type="match status" value="2"/>
</dbReference>
<keyword id="KW-0148">Chlorophyll</keyword>
<keyword id="KW-0150">Chloroplast</keyword>
<keyword id="KW-0157">Chromophore</keyword>
<keyword id="KW-0903">Direct protein sequencing</keyword>
<keyword id="KW-0437">Light-harvesting polypeptide</keyword>
<keyword id="KW-0934">Plastid</keyword>
<keyword id="KW-0677">Repeat</keyword>
<keyword id="KW-0809">Transit peptide</keyword>
<proteinExistence type="evidence at protein level"/>
<name>PCP_SYMSP</name>
<evidence type="ECO:0000250" key="1"/>
<evidence type="ECO:0000269" key="2">
    <source>
    </source>
</evidence>